<protein>
    <recommendedName>
        <fullName>Serine/threonine protein phosphatase 2A 55 kDa regulatory subunit B beta isoform</fullName>
        <shortName>PP2A, subunit B, beta isoform</shortName>
    </recommendedName>
</protein>
<name>2ABB_ORYSI</name>
<dbReference type="EMBL" id="AF081922">
    <property type="protein sequence ID" value="AAC32204.1"/>
    <property type="molecule type" value="Genomic_DNA"/>
</dbReference>
<dbReference type="EMBL" id="AF081923">
    <property type="protein sequence ID" value="AAC32205.1"/>
    <property type="molecule type" value="mRNA"/>
</dbReference>
<dbReference type="EMBL" id="CM000127">
    <property type="status" value="NOT_ANNOTATED_CDS"/>
    <property type="molecule type" value="Genomic_DNA"/>
</dbReference>
<dbReference type="EMBL" id="CT831102">
    <property type="status" value="NOT_ANNOTATED_CDS"/>
    <property type="molecule type" value="mRNA"/>
</dbReference>
<dbReference type="PIR" id="T02952">
    <property type="entry name" value="T02952"/>
</dbReference>
<dbReference type="SMR" id="A2X2K3"/>
<dbReference type="STRING" id="39946.A2X2K3"/>
<dbReference type="EnsemblPlants" id="BGIOSGA006852-TA">
    <property type="protein sequence ID" value="BGIOSGA006852-PA"/>
    <property type="gene ID" value="BGIOSGA006852"/>
</dbReference>
<dbReference type="EnsemblPlants" id="OsKYG_02g0009130.01">
    <property type="protein sequence ID" value="OsKYG_02g0009130.01"/>
    <property type="gene ID" value="OsKYG_02g0009130"/>
</dbReference>
<dbReference type="EnsemblPlants" id="OsKYG_02g0009130.02">
    <property type="protein sequence ID" value="OsKYG_02g0009130.02"/>
    <property type="gene ID" value="OsKYG_02g0009130"/>
</dbReference>
<dbReference type="EnsemblPlants" id="OsLima_02g0009490.01">
    <property type="protein sequence ID" value="OsLima_02g0009490.01"/>
    <property type="gene ID" value="OsLima_02g0009490"/>
</dbReference>
<dbReference type="EnsemblPlants" id="OsLima_02g0009490.02">
    <property type="protein sequence ID" value="OsLima_02g0009490.02"/>
    <property type="gene ID" value="OsLima_02g0009490"/>
</dbReference>
<dbReference type="Gramene" id="BGIOSGA006852-TA">
    <property type="protein sequence ID" value="BGIOSGA006852-PA"/>
    <property type="gene ID" value="BGIOSGA006852"/>
</dbReference>
<dbReference type="Gramene" id="OsKYG_02g0009130.01">
    <property type="protein sequence ID" value="OsKYG_02g0009130.01"/>
    <property type="gene ID" value="OsKYG_02g0009130"/>
</dbReference>
<dbReference type="Gramene" id="OsKYG_02g0009130.02">
    <property type="protein sequence ID" value="OsKYG_02g0009130.02"/>
    <property type="gene ID" value="OsKYG_02g0009130"/>
</dbReference>
<dbReference type="Gramene" id="OsLima_02g0009490.01">
    <property type="protein sequence ID" value="OsLima_02g0009490.01"/>
    <property type="gene ID" value="OsLima_02g0009490"/>
</dbReference>
<dbReference type="Gramene" id="OsLima_02g0009490.02">
    <property type="protein sequence ID" value="OsLima_02g0009490.02"/>
    <property type="gene ID" value="OsLima_02g0009490"/>
</dbReference>
<dbReference type="HOGENOM" id="CLU_021713_3_2_1"/>
<dbReference type="OMA" id="NQIKWCR"/>
<dbReference type="Proteomes" id="UP000007015">
    <property type="component" value="Chromosome 2"/>
</dbReference>
<dbReference type="ExpressionAtlas" id="A2X2K3">
    <property type="expression patterns" value="differential"/>
</dbReference>
<dbReference type="GO" id="GO:0000159">
    <property type="term" value="C:protein phosphatase type 2A complex"/>
    <property type="evidence" value="ECO:0007669"/>
    <property type="project" value="InterPro"/>
</dbReference>
<dbReference type="GO" id="GO:0019888">
    <property type="term" value="F:protein phosphatase regulator activity"/>
    <property type="evidence" value="ECO:0007669"/>
    <property type="project" value="InterPro"/>
</dbReference>
<dbReference type="FunFam" id="2.130.10.10:FF:000569">
    <property type="entry name" value="Serine/threonine-protein phosphatase 2A 55 kDa regulatory subunit B"/>
    <property type="match status" value="1"/>
</dbReference>
<dbReference type="FunFam" id="2.130.10.10:FF:000609">
    <property type="entry name" value="Serine/threonine-protein phosphatase 2A 55 kDa regulatory subunit B"/>
    <property type="match status" value="1"/>
</dbReference>
<dbReference type="Gene3D" id="2.130.10.10">
    <property type="entry name" value="YVTN repeat-like/Quinoprotein amine dehydrogenase"/>
    <property type="match status" value="1"/>
</dbReference>
<dbReference type="InterPro" id="IPR000009">
    <property type="entry name" value="PP2A_PR55"/>
</dbReference>
<dbReference type="InterPro" id="IPR018067">
    <property type="entry name" value="PP2A_PR55_CS"/>
</dbReference>
<dbReference type="InterPro" id="IPR015943">
    <property type="entry name" value="WD40/YVTN_repeat-like_dom_sf"/>
</dbReference>
<dbReference type="InterPro" id="IPR036322">
    <property type="entry name" value="WD40_repeat_dom_sf"/>
</dbReference>
<dbReference type="InterPro" id="IPR001680">
    <property type="entry name" value="WD40_rpt"/>
</dbReference>
<dbReference type="PANTHER" id="PTHR11871">
    <property type="entry name" value="PROTEIN PHOSPHATASE PP2A REGULATORY SUBUNIT B"/>
    <property type="match status" value="1"/>
</dbReference>
<dbReference type="Pfam" id="PF00400">
    <property type="entry name" value="WD40"/>
    <property type="match status" value="1"/>
</dbReference>
<dbReference type="PIRSF" id="PIRSF037309">
    <property type="entry name" value="PP2A_PR55"/>
    <property type="match status" value="1"/>
</dbReference>
<dbReference type="PRINTS" id="PR00600">
    <property type="entry name" value="PP2APR55"/>
</dbReference>
<dbReference type="SMART" id="SM00320">
    <property type="entry name" value="WD40"/>
    <property type="match status" value="6"/>
</dbReference>
<dbReference type="SUPFAM" id="SSF50978">
    <property type="entry name" value="WD40 repeat-like"/>
    <property type="match status" value="1"/>
</dbReference>
<dbReference type="PROSITE" id="PS01024">
    <property type="entry name" value="PR55_1"/>
    <property type="match status" value="1"/>
</dbReference>
<dbReference type="PROSITE" id="PS01025">
    <property type="entry name" value="PR55_2"/>
    <property type="match status" value="1"/>
</dbReference>
<dbReference type="PROSITE" id="PS00678">
    <property type="entry name" value="WD_REPEATS_1"/>
    <property type="match status" value="1"/>
</dbReference>
<sequence length="525" mass="59040">MDPFSKSPDDDDLRPEAEAARRPQPQPQPREWRFAQVFGERAAGEDVQEVDIISAIEFDKSGDHLATGDRGGRVVLFERTDSRDSASRSELERQDYPIARHPEFRYKTEFQSHEPEFDYLKSLEIEEKINKIKWCQTANNALFLLSTNDKTIKYWKVQERKVKRISVMNLNTSQSSGNGTTSSSSSSSSRAILPNGGCSEKLYNFPNNDLLFPPGGCTSLRLPVVVTGQDLNLVPRCRRVYSHAHDYHINSISNNSDGETYISADDLRINLWNLEISNQSFNIVDVKPANMEDLTEVITCAEFHPTHCNTLAYSSSKGSIRLIDLRQSALCDNHAKLFEEHEAPGSRSFFTEIIASVSDIKFARDGRHILSRDYMTLKLWDINMDSGPVATFQVHEYLRPKLCDLYENDSIFDKFECCLSGDGLRVATGSYSNLFRVFGCTPGSAEATTLEASRNPMRRQVANPTRPARTLTSLTRAVRRGGENPGVDANGNSYDLSTKLLHLAWHPTENSIACAAANSLYMYYA</sequence>
<organism>
    <name type="scientific">Oryza sativa subsp. indica</name>
    <name type="common">Rice</name>
    <dbReference type="NCBI Taxonomy" id="39946"/>
    <lineage>
        <taxon>Eukaryota</taxon>
        <taxon>Viridiplantae</taxon>
        <taxon>Streptophyta</taxon>
        <taxon>Embryophyta</taxon>
        <taxon>Tracheophyta</taxon>
        <taxon>Spermatophyta</taxon>
        <taxon>Magnoliopsida</taxon>
        <taxon>Liliopsida</taxon>
        <taxon>Poales</taxon>
        <taxon>Poaceae</taxon>
        <taxon>BOP clade</taxon>
        <taxon>Oryzoideae</taxon>
        <taxon>Oryzeae</taxon>
        <taxon>Oryzinae</taxon>
        <taxon>Oryza</taxon>
        <taxon>Oryza sativa</taxon>
    </lineage>
</organism>
<proteinExistence type="evidence at transcript level"/>
<gene>
    <name type="ORF">OsI_006296</name>
</gene>
<reference key="1">
    <citation type="submission" date="1998-08" db="EMBL/GenBank/DDBJ databases">
        <title>Molecular cloning and characterization of cDNA and genomic DNA encodes the homologue of the 55 kDa B regulatory subunit of protein phosphatase 2A in rice (Oryza sativa L.).</title>
        <authorList>
            <person name="Chang M.C."/>
            <person name="Chen X.C."/>
            <person name="Daughetee S."/>
            <person name="Wu R."/>
        </authorList>
    </citation>
    <scope>NUCLEOTIDE SEQUENCE [GENOMIC DNA / MRNA]</scope>
    <source>
        <strain>cv. IR36</strain>
        <tissue>Seed</tissue>
    </source>
</reference>
<reference key="2">
    <citation type="journal article" date="2005" name="PLoS Biol.">
        <title>The genomes of Oryza sativa: a history of duplications.</title>
        <authorList>
            <person name="Yu J."/>
            <person name="Wang J."/>
            <person name="Lin W."/>
            <person name="Li S."/>
            <person name="Li H."/>
            <person name="Zhou J."/>
            <person name="Ni P."/>
            <person name="Dong W."/>
            <person name="Hu S."/>
            <person name="Zeng C."/>
            <person name="Zhang J."/>
            <person name="Zhang Y."/>
            <person name="Li R."/>
            <person name="Xu Z."/>
            <person name="Li S."/>
            <person name="Li X."/>
            <person name="Zheng H."/>
            <person name="Cong L."/>
            <person name="Lin L."/>
            <person name="Yin J."/>
            <person name="Geng J."/>
            <person name="Li G."/>
            <person name="Shi J."/>
            <person name="Liu J."/>
            <person name="Lv H."/>
            <person name="Li J."/>
            <person name="Wang J."/>
            <person name="Deng Y."/>
            <person name="Ran L."/>
            <person name="Shi X."/>
            <person name="Wang X."/>
            <person name="Wu Q."/>
            <person name="Li C."/>
            <person name="Ren X."/>
            <person name="Wang J."/>
            <person name="Wang X."/>
            <person name="Li D."/>
            <person name="Liu D."/>
            <person name="Zhang X."/>
            <person name="Ji Z."/>
            <person name="Zhao W."/>
            <person name="Sun Y."/>
            <person name="Zhang Z."/>
            <person name="Bao J."/>
            <person name="Han Y."/>
            <person name="Dong L."/>
            <person name="Ji J."/>
            <person name="Chen P."/>
            <person name="Wu S."/>
            <person name="Liu J."/>
            <person name="Xiao Y."/>
            <person name="Bu D."/>
            <person name="Tan J."/>
            <person name="Yang L."/>
            <person name="Ye C."/>
            <person name="Zhang J."/>
            <person name="Xu J."/>
            <person name="Zhou Y."/>
            <person name="Yu Y."/>
            <person name="Zhang B."/>
            <person name="Zhuang S."/>
            <person name="Wei H."/>
            <person name="Liu B."/>
            <person name="Lei M."/>
            <person name="Yu H."/>
            <person name="Li Y."/>
            <person name="Xu H."/>
            <person name="Wei S."/>
            <person name="He X."/>
            <person name="Fang L."/>
            <person name="Zhang Z."/>
            <person name="Zhang Y."/>
            <person name="Huang X."/>
            <person name="Su Z."/>
            <person name="Tong W."/>
            <person name="Li J."/>
            <person name="Tong Z."/>
            <person name="Li S."/>
            <person name="Ye J."/>
            <person name="Wang L."/>
            <person name="Fang L."/>
            <person name="Lei T."/>
            <person name="Chen C.-S."/>
            <person name="Chen H.-C."/>
            <person name="Xu Z."/>
            <person name="Li H."/>
            <person name="Huang H."/>
            <person name="Zhang F."/>
            <person name="Xu H."/>
            <person name="Li N."/>
            <person name="Zhao C."/>
            <person name="Li S."/>
            <person name="Dong L."/>
            <person name="Huang Y."/>
            <person name="Li L."/>
            <person name="Xi Y."/>
            <person name="Qi Q."/>
            <person name="Li W."/>
            <person name="Zhang B."/>
            <person name="Hu W."/>
            <person name="Zhang Y."/>
            <person name="Tian X."/>
            <person name="Jiao Y."/>
            <person name="Liang X."/>
            <person name="Jin J."/>
            <person name="Gao L."/>
            <person name="Zheng W."/>
            <person name="Hao B."/>
            <person name="Liu S.-M."/>
            <person name="Wang W."/>
            <person name="Yuan L."/>
            <person name="Cao M."/>
            <person name="McDermott J."/>
            <person name="Samudrala R."/>
            <person name="Wang J."/>
            <person name="Wong G.K.-S."/>
            <person name="Yang H."/>
        </authorList>
    </citation>
    <scope>NUCLEOTIDE SEQUENCE [LARGE SCALE GENOMIC DNA]</scope>
    <source>
        <strain>cv. 93-11</strain>
    </source>
</reference>
<reference key="3">
    <citation type="journal article" date="2007" name="Plant Mol. Biol.">
        <title>A collection of 10,096 indica rice full-length cDNAs reveals highly expressed sequence divergence between Oryza sativa indica and japonica subspecies.</title>
        <authorList>
            <person name="Liu X."/>
            <person name="Lu T."/>
            <person name="Yu S."/>
            <person name="Li Y."/>
            <person name="Huang Y."/>
            <person name="Huang T."/>
            <person name="Zhang L."/>
            <person name="Zhu J."/>
            <person name="Zhao Q."/>
            <person name="Fan D."/>
            <person name="Mu J."/>
            <person name="Shangguan Y."/>
            <person name="Feng Q."/>
            <person name="Guan J."/>
            <person name="Ying K."/>
            <person name="Zhang Y."/>
            <person name="Lin Z."/>
            <person name="Sun Z."/>
            <person name="Qian Q."/>
            <person name="Lu Y."/>
            <person name="Han B."/>
        </authorList>
    </citation>
    <scope>NUCLEOTIDE SEQUENCE [LARGE SCALE MRNA]</scope>
    <source>
        <strain>cv. Guang-Lu-Ai No.4</strain>
    </source>
</reference>
<evidence type="ECO:0000250" key="1"/>
<evidence type="ECO:0000256" key="2">
    <source>
        <dbReference type="SAM" id="MobiDB-lite"/>
    </source>
</evidence>
<evidence type="ECO:0000305" key="3"/>
<comment type="function">
    <text evidence="1">The B regulatory subunit may modulate substrate selectivity and catalytic activity, and may also direct the localization of the catalytic enzyme to a particular subcellular compartment.</text>
</comment>
<comment type="subunit">
    <text evidence="1">PP2A consists of a common heteromeric enzyme, composed of a catalytic subunit (subunits C), a constant regulatory subunit (subunit A), and a variety of regulatory subunits such as subunits B (the R2/B/PR55/B55, R3/B''/PR72/PR130/PR59 and R5/B'/B56 families).</text>
</comment>
<comment type="similarity">
    <text evidence="3">Belongs to the phosphatase 2A regulatory subunit B family.</text>
</comment>
<keyword id="KW-1185">Reference proteome</keyword>
<keyword id="KW-0677">Repeat</keyword>
<keyword id="KW-0853">WD repeat</keyword>
<feature type="chain" id="PRO_0000301659" description="Serine/threonine protein phosphatase 2A 55 kDa regulatory subunit B beta isoform">
    <location>
        <begin position="1"/>
        <end position="525"/>
    </location>
</feature>
<feature type="repeat" description="WD 1">
    <location>
        <begin position="48"/>
        <end position="87"/>
    </location>
</feature>
<feature type="repeat" description="WD 2">
    <location>
        <begin position="124"/>
        <end position="165"/>
    </location>
</feature>
<feature type="repeat" description="WD 3">
    <location>
        <begin position="244"/>
        <end position="282"/>
    </location>
</feature>
<feature type="repeat" description="WD 4">
    <location>
        <begin position="293"/>
        <end position="333"/>
    </location>
</feature>
<feature type="repeat" description="WD 5">
    <location>
        <begin position="352"/>
        <end position="390"/>
    </location>
</feature>
<feature type="repeat" description="WD 6">
    <location>
        <begin position="495"/>
        <end position="525"/>
    </location>
</feature>
<feature type="region of interest" description="Disordered" evidence="2">
    <location>
        <begin position="1"/>
        <end position="31"/>
    </location>
</feature>
<feature type="region of interest" description="Disordered" evidence="2">
    <location>
        <begin position="169"/>
        <end position="191"/>
    </location>
</feature>
<feature type="compositionally biased region" description="Low complexity" evidence="2">
    <location>
        <begin position="171"/>
        <end position="189"/>
    </location>
</feature>
<feature type="sequence conflict" description="In Ref. 1; AAC32204/AAC32205." evidence="3" ref="1">
    <original>Q</original>
    <variation>QPQ</variation>
    <location>
        <position position="28"/>
    </location>
</feature>
<feature type="sequence conflict" description="In Ref. 1; AAC32204/AAC32205." evidence="3" ref="1">
    <original>A</original>
    <variation>AYITG</variation>
    <location>
        <position position="525"/>
    </location>
</feature>
<accession>A2X2K3</accession>
<accession>O82774</accession>
<accession>Q6Z8B7</accession>